<evidence type="ECO:0000255" key="1">
    <source>
        <dbReference type="HAMAP-Rule" id="MF_00593"/>
    </source>
</evidence>
<dbReference type="EC" id="6.2.1.54" evidence="1"/>
<dbReference type="EMBL" id="CP000056">
    <property type="protein sequence ID" value="AAX72167.1"/>
    <property type="molecule type" value="Genomic_DNA"/>
</dbReference>
<dbReference type="RefSeq" id="WP_011284899.1">
    <property type="nucleotide sequence ID" value="NC_007296.2"/>
</dbReference>
<dbReference type="SMR" id="Q48SZ3"/>
<dbReference type="KEGG" id="spb:M28_Spy1054"/>
<dbReference type="HOGENOM" id="CLU_000022_2_12_9"/>
<dbReference type="UniPathway" id="UPA00556"/>
<dbReference type="GO" id="GO:0005737">
    <property type="term" value="C:cytoplasm"/>
    <property type="evidence" value="ECO:0007669"/>
    <property type="project" value="UniProtKB-SubCell"/>
</dbReference>
<dbReference type="GO" id="GO:0005524">
    <property type="term" value="F:ATP binding"/>
    <property type="evidence" value="ECO:0007669"/>
    <property type="project" value="UniProtKB-KW"/>
</dbReference>
<dbReference type="GO" id="GO:0047473">
    <property type="term" value="F:D-alanine [D-alanyl carrier protein] ligase activity"/>
    <property type="evidence" value="ECO:0007669"/>
    <property type="project" value="UniProtKB-UniRule"/>
</dbReference>
<dbReference type="GO" id="GO:0070395">
    <property type="term" value="P:lipoteichoic acid biosynthetic process"/>
    <property type="evidence" value="ECO:0007669"/>
    <property type="project" value="UniProtKB-UniRule"/>
</dbReference>
<dbReference type="CDD" id="cd05945">
    <property type="entry name" value="DltA"/>
    <property type="match status" value="1"/>
</dbReference>
<dbReference type="FunFam" id="3.30.300.30:FF:000012">
    <property type="entry name" value="D-alanine--D-alanyl carrier protein ligase"/>
    <property type="match status" value="1"/>
</dbReference>
<dbReference type="Gene3D" id="3.30.300.30">
    <property type="match status" value="1"/>
</dbReference>
<dbReference type="Gene3D" id="3.40.50.12780">
    <property type="entry name" value="N-terminal domain of ligase-like"/>
    <property type="match status" value="1"/>
</dbReference>
<dbReference type="HAMAP" id="MF_00593">
    <property type="entry name" value="DltA"/>
    <property type="match status" value="1"/>
</dbReference>
<dbReference type="InterPro" id="IPR010071">
    <property type="entry name" value="AA_adenyl_dom"/>
</dbReference>
<dbReference type="InterPro" id="IPR025110">
    <property type="entry name" value="AMP-bd_C"/>
</dbReference>
<dbReference type="InterPro" id="IPR045851">
    <property type="entry name" value="AMP-bd_C_sf"/>
</dbReference>
<dbReference type="InterPro" id="IPR020845">
    <property type="entry name" value="AMP-binding_CS"/>
</dbReference>
<dbReference type="InterPro" id="IPR000873">
    <property type="entry name" value="AMP-dep_synth/lig_dom"/>
</dbReference>
<dbReference type="InterPro" id="IPR042099">
    <property type="entry name" value="ANL_N_sf"/>
</dbReference>
<dbReference type="InterPro" id="IPR010072">
    <property type="entry name" value="DltA"/>
</dbReference>
<dbReference type="InterPro" id="IPR044507">
    <property type="entry name" value="DltA-like"/>
</dbReference>
<dbReference type="NCBIfam" id="TIGR01733">
    <property type="entry name" value="AA-adenyl-dom"/>
    <property type="match status" value="1"/>
</dbReference>
<dbReference type="NCBIfam" id="TIGR01734">
    <property type="entry name" value="D-ala-DACP-lig"/>
    <property type="match status" value="1"/>
</dbReference>
<dbReference type="NCBIfam" id="NF003417">
    <property type="entry name" value="PRK04813.1"/>
    <property type="match status" value="1"/>
</dbReference>
<dbReference type="PANTHER" id="PTHR45398">
    <property type="match status" value="1"/>
</dbReference>
<dbReference type="PANTHER" id="PTHR45398:SF1">
    <property type="entry name" value="ENZYME, PUTATIVE (JCVI)-RELATED"/>
    <property type="match status" value="1"/>
</dbReference>
<dbReference type="Pfam" id="PF00501">
    <property type="entry name" value="AMP-binding"/>
    <property type="match status" value="1"/>
</dbReference>
<dbReference type="Pfam" id="PF13193">
    <property type="entry name" value="AMP-binding_C"/>
    <property type="match status" value="1"/>
</dbReference>
<dbReference type="SUPFAM" id="SSF56801">
    <property type="entry name" value="Acetyl-CoA synthetase-like"/>
    <property type="match status" value="1"/>
</dbReference>
<dbReference type="PROSITE" id="PS00455">
    <property type="entry name" value="AMP_BINDING"/>
    <property type="match status" value="1"/>
</dbReference>
<protein>
    <recommendedName>
        <fullName evidence="1">D-alanine--D-alanyl carrier protein ligase</fullName>
        <shortName evidence="1">DCL</shortName>
        <ecNumber evidence="1">6.2.1.54</ecNumber>
    </recommendedName>
    <alternativeName>
        <fullName evidence="1">D-alanine--poly(phosphoribitol) ligase subunit 1</fullName>
    </alternativeName>
    <alternativeName>
        <fullName evidence="1">D-alanine-activating enzyme</fullName>
        <shortName evidence="1">DAE</shortName>
    </alternativeName>
</protein>
<reference key="1">
    <citation type="journal article" date="2005" name="J. Infect. Dis.">
        <title>Genome sequence of a serotype M28 strain of group A Streptococcus: potential new insights into puerperal sepsis and bacterial disease specificity.</title>
        <authorList>
            <person name="Green N.M."/>
            <person name="Zhang S."/>
            <person name="Porcella S.F."/>
            <person name="Nagiec M.J."/>
            <person name="Barbian K.D."/>
            <person name="Beres S.B."/>
            <person name="Lefebvre R.B."/>
            <person name="Musser J.M."/>
        </authorList>
    </citation>
    <scope>NUCLEOTIDE SEQUENCE [LARGE SCALE GENOMIC DNA]</scope>
    <source>
        <strain>MGAS6180</strain>
    </source>
</reference>
<feature type="chain" id="PRO_1000025541" description="D-alanine--D-alanyl carrier protein ligase">
    <location>
        <begin position="1"/>
        <end position="512"/>
    </location>
</feature>
<feature type="binding site" evidence="1">
    <location>
        <begin position="152"/>
        <end position="153"/>
    </location>
    <ligand>
        <name>ATP</name>
        <dbReference type="ChEBI" id="CHEBI:30616"/>
    </ligand>
</feature>
<feature type="binding site" evidence="1">
    <location>
        <position position="199"/>
    </location>
    <ligand>
        <name>D-alanine</name>
        <dbReference type="ChEBI" id="CHEBI:57416"/>
    </ligand>
</feature>
<feature type="binding site" evidence="1">
    <location>
        <begin position="294"/>
        <end position="299"/>
    </location>
    <ligand>
        <name>ATP</name>
        <dbReference type="ChEBI" id="CHEBI:30616"/>
    </ligand>
</feature>
<feature type="binding site" evidence="1">
    <location>
        <position position="303"/>
    </location>
    <ligand>
        <name>D-alanine</name>
        <dbReference type="ChEBI" id="CHEBI:57416"/>
    </ligand>
</feature>
<feature type="binding site" evidence="1">
    <location>
        <position position="385"/>
    </location>
    <ligand>
        <name>ATP</name>
        <dbReference type="ChEBI" id="CHEBI:30616"/>
    </ligand>
</feature>
<feature type="binding site" evidence="1">
    <location>
        <begin position="397"/>
        <end position="400"/>
    </location>
    <ligand>
        <name>ATP</name>
        <dbReference type="ChEBI" id="CHEBI:30616"/>
    </ligand>
</feature>
<feature type="binding site" evidence="1">
    <location>
        <position position="499"/>
    </location>
    <ligand>
        <name>ATP</name>
        <dbReference type="ChEBI" id="CHEBI:30616"/>
    </ligand>
</feature>
<feature type="binding site" evidence="1">
    <location>
        <position position="499"/>
    </location>
    <ligand>
        <name>D-alanine</name>
        <dbReference type="ChEBI" id="CHEBI:57416"/>
    </ligand>
</feature>
<gene>
    <name evidence="1" type="primary">dltA</name>
    <name type="ordered locus">M28_Spy1054</name>
</gene>
<name>DLTA_STRPM</name>
<proteinExistence type="inferred from homology"/>
<sequence length="512" mass="56952">MIKDMIDSIEQFAQTQADFPVYDCLGEHRTYGQLKRDSDSIAAFIDSLALLAKSPVLVFGAQTYDMLATFVALTKSGHAYIPVDVHSAPERILAIIEIAKPSLIIAIEEFPLTIEGISLVSLSEIESAKLAEMPYERTHSVKGDDNYYIIFTSGTTGQPKGVQISHDNLLSFTNWMIEDAAFDVPKQPQMLAQPPYSFDLSVMYWAPTLALGGTLFALPKELVADFKQLFTTIAQLPVGIWTSTPSFADMAMLSDDFCQAKMPALTHFYFDGEELTVSTARKLFERFPSAKIINAYGPTEATVALSAIEITREMVDNYTRLPIGYPKPDSPTYIIDEDGKELASGEQGEIIVTGPAVSKGYLNNPEKTAEAFFTFKGQPAYHTGDIGSLTEDNILLYGGRLDFQIKYAGYRIELEDVSQQLNQSPMVASAVAVPRYNKEHKVQNLLAYIVVKDGVKERFDRELELTKAIKASVKDHMMSYMMPSKFLYRDSLPLTPNGKIDIKTLINEVNNR</sequence>
<organism>
    <name type="scientific">Streptococcus pyogenes serotype M28 (strain MGAS6180)</name>
    <dbReference type="NCBI Taxonomy" id="319701"/>
    <lineage>
        <taxon>Bacteria</taxon>
        <taxon>Bacillati</taxon>
        <taxon>Bacillota</taxon>
        <taxon>Bacilli</taxon>
        <taxon>Lactobacillales</taxon>
        <taxon>Streptococcaceae</taxon>
        <taxon>Streptococcus</taxon>
    </lineage>
</organism>
<accession>Q48SZ3</accession>
<keyword id="KW-0067">ATP-binding</keyword>
<keyword id="KW-0963">Cytoplasm</keyword>
<keyword id="KW-0436">Ligase</keyword>
<keyword id="KW-0547">Nucleotide-binding</keyword>
<comment type="function">
    <text evidence="1">Catalyzes the first step in the D-alanylation of lipoteichoic acid (LTA), the activation of D-alanine and its transfer onto the D-alanyl carrier protein (Dcp) DltC. In an ATP-dependent two-step reaction, forms a high energy D-alanyl-AMP intermediate, followed by transfer of the D-alanyl residue as a thiol ester to the phosphopantheinyl prosthetic group of the Dcp. D-alanylation of LTA plays an important role in modulating the properties of the cell wall in Gram-positive bacteria, influencing the net charge of the cell wall.</text>
</comment>
<comment type="catalytic activity">
    <reaction evidence="1">
        <text>holo-[D-alanyl-carrier protein] + D-alanine + ATP = D-alanyl-[D-alanyl-carrier protein] + AMP + diphosphate</text>
        <dbReference type="Rhea" id="RHEA:55132"/>
        <dbReference type="Rhea" id="RHEA-COMP:14102"/>
        <dbReference type="Rhea" id="RHEA-COMP:14103"/>
        <dbReference type="ChEBI" id="CHEBI:30616"/>
        <dbReference type="ChEBI" id="CHEBI:33019"/>
        <dbReference type="ChEBI" id="CHEBI:57416"/>
        <dbReference type="ChEBI" id="CHEBI:64479"/>
        <dbReference type="ChEBI" id="CHEBI:138620"/>
        <dbReference type="ChEBI" id="CHEBI:456215"/>
        <dbReference type="EC" id="6.2.1.54"/>
    </reaction>
</comment>
<comment type="pathway">
    <text evidence="1">Cell wall biogenesis; lipoteichoic acid biosynthesis.</text>
</comment>
<comment type="subcellular location">
    <subcellularLocation>
        <location evidence="1">Cytoplasm</location>
    </subcellularLocation>
</comment>
<comment type="similarity">
    <text evidence="1">Belongs to the ATP-dependent AMP-binding enzyme family. DltA subfamily.</text>
</comment>